<feature type="chain" id="PRO_0000219854" description="SPI-1 type 3 secretion system translocon protein SctE">
    <location>
        <begin position="1"/>
        <end position="593"/>
    </location>
</feature>
<feature type="transmembrane region" description="Helical" evidence="2">
    <location>
        <begin position="330"/>
        <end position="350"/>
    </location>
</feature>
<feature type="transmembrane region" description="Helical" evidence="2">
    <location>
        <begin position="409"/>
        <end position="429"/>
    </location>
</feature>
<feature type="coiled-coil region" evidence="2">
    <location>
        <begin position="151"/>
        <end position="208"/>
    </location>
</feature>
<feature type="coiled-coil region" evidence="2">
    <location>
        <begin position="287"/>
        <end position="314"/>
    </location>
</feature>
<name>SCTE1_SALDU</name>
<comment type="function">
    <text evidence="1">Component of the type III secretion system 1 (SPI-1 T3SS), also called injectisome, which is used to inject bacterial effector proteins into eukaryotic host cells (By similarity). SipB/SctE1 and SipC/SctB are inserted into the host membrane where they form a pore and allow the translocation of effector proteins into the cytosol of target cells (By similarity).</text>
</comment>
<comment type="subunit">
    <text evidence="1">The core secretion machinery of the T3SS is composed of approximately 20 different proteins, including cytoplasmic components, a base, an export apparatus and a needle (By similarity). This subunit is involved in the formation of a pore, called the translocon, in host membrane (By similarity).</text>
</comment>
<comment type="subcellular location">
    <subcellularLocation>
        <location evidence="1">Secreted</location>
    </subcellularLocation>
    <subcellularLocation>
        <location evidence="1">Host membrane</location>
        <topology evidence="2">Multi-pass membrane protein</topology>
    </subcellularLocation>
    <text evidence="1">Secreted via the type III secretion system 1 (SPI-1 T3SS).</text>
</comment>
<comment type="similarity">
    <text evidence="3">Belongs to the SctE/SipB/YopB family.</text>
</comment>
<organism>
    <name type="scientific">Salmonella dublin</name>
    <dbReference type="NCBI Taxonomy" id="98360"/>
    <lineage>
        <taxon>Bacteria</taxon>
        <taxon>Pseudomonadati</taxon>
        <taxon>Pseudomonadota</taxon>
        <taxon>Gammaproteobacteria</taxon>
        <taxon>Enterobacterales</taxon>
        <taxon>Enterobacteriaceae</taxon>
        <taxon>Salmonella</taxon>
    </lineage>
</organism>
<accession>Q79BT1</accession>
<protein>
    <recommendedName>
        <fullName evidence="3">SPI-1 type 3 secretion system translocon protein SctE</fullName>
        <shortName evidence="3">SPI-1 T3SS translocon protein SctE</shortName>
    </recommendedName>
    <alternativeName>
        <fullName>Cell invasion protein SipB</fullName>
    </alternativeName>
    <alternativeName>
        <fullName>Effector protein SipB</fullName>
    </alternativeName>
</protein>
<sequence>MVNDASSISRSGYTQNPRLAEAAFEGVRKNTDFLKAADKAFKDVVATKAGDLKAGTKSGESAINTVGLKPPTDAAREKLSSEGQLTLLLGKLMTLLGDVSLSQLESRLAVWQAMIESQKEMGIQVSKEFQTALGEAQEATDLYEASIKKTDTAKSVYDAATKKLTQAQNKLQSLDPADPGYAQAEAAVEQAGKEATEAKEALDKATDATVKAGTDAKAKAEKADNILTKFQGTANAASQNQVSQGEQDNLSNVARLTMLMAMFIEIVGKNTEESLQNDLALFNALQEGRQAEMEKKSAEFQEETRKAEETNRIMGCIGKVLGALLTIVSVVAAVFTGGASLALAAVGLAVMVADEIVKAATGVSFIQQALNPIMEHVLKPLMELIGKAITKALEGLGVDKKTAEMAGSIVGAIVAAIAMVAVIVVVAVVGKGAAAKLGNALSKMMGETIKKLVPNVLKQLAQNGSKLFTQGMQRITSGLGNVGSKMGLQTNALSKELVGNTLNKVALGMEVTNTAAQSAGGVAEGVFIKNASEALADFMLARFAMDQIQQWLKQSVEIFGENQKVTAELQKAMSSAVQQNADASRFILRQSRA</sequence>
<keyword id="KW-0175">Coiled coil</keyword>
<keyword id="KW-1043">Host membrane</keyword>
<keyword id="KW-0472">Membrane</keyword>
<keyword id="KW-0964">Secreted</keyword>
<keyword id="KW-0812">Transmembrane</keyword>
<keyword id="KW-1133">Transmembrane helix</keyword>
<keyword id="KW-0843">Virulence</keyword>
<gene>
    <name evidence="1" type="primary">sctE1</name>
    <name type="synonym">sipB</name>
</gene>
<dbReference type="EMBL" id="U66877">
    <property type="protein sequence ID" value="AAB06795.1"/>
    <property type="molecule type" value="Genomic_DNA"/>
</dbReference>
<dbReference type="RefSeq" id="WP_000245788.1">
    <property type="nucleotide sequence ID" value="NZ_VDCP01000001.1"/>
</dbReference>
<dbReference type="SMR" id="Q79BT1"/>
<dbReference type="PATRIC" id="fig|98360.39.peg.2686"/>
<dbReference type="OMA" id="DIMHQAN"/>
<dbReference type="GO" id="GO:0005576">
    <property type="term" value="C:extracellular region"/>
    <property type="evidence" value="ECO:0007669"/>
    <property type="project" value="UniProtKB-SubCell"/>
</dbReference>
<dbReference type="GO" id="GO:0033644">
    <property type="term" value="C:host cell membrane"/>
    <property type="evidence" value="ECO:0007669"/>
    <property type="project" value="UniProtKB-SubCell"/>
</dbReference>
<dbReference type="GO" id="GO:0016020">
    <property type="term" value="C:membrane"/>
    <property type="evidence" value="ECO:0007669"/>
    <property type="project" value="UniProtKB-KW"/>
</dbReference>
<dbReference type="Gene3D" id="1.20.120.330">
    <property type="entry name" value="Nucleotidyltransferases domain 2"/>
    <property type="match status" value="2"/>
</dbReference>
<dbReference type="InterPro" id="IPR006972">
    <property type="entry name" value="BipB-like_C"/>
</dbReference>
<dbReference type="InterPro" id="IPR032391">
    <property type="entry name" value="IpaB/BipB/SctE_N"/>
</dbReference>
<dbReference type="InterPro" id="IPR003895">
    <property type="entry name" value="T3SS_SctE/BipB"/>
</dbReference>
<dbReference type="NCBIfam" id="NF011901">
    <property type="entry name" value="PRK15374.1"/>
    <property type="match status" value="1"/>
</dbReference>
<dbReference type="Pfam" id="PF04888">
    <property type="entry name" value="SseC"/>
    <property type="match status" value="1"/>
</dbReference>
<dbReference type="Pfam" id="PF16535">
    <property type="entry name" value="T3SSipB"/>
    <property type="match status" value="1"/>
</dbReference>
<dbReference type="PRINTS" id="PR01375">
    <property type="entry name" value="BACINVASINB"/>
</dbReference>
<evidence type="ECO:0000250" key="1">
    <source>
        <dbReference type="UniProtKB" id="Q56019"/>
    </source>
</evidence>
<evidence type="ECO:0000255" key="2"/>
<evidence type="ECO:0000305" key="3"/>
<proteinExistence type="inferred from homology"/>
<reference key="1">
    <citation type="submission" date="1996-08" db="EMBL/GenBank/DDBJ databases">
        <title>Sip invasins of Salmonella dublin are involved in macrophage cytotoxicity and mouse virulence.</title>
        <authorList>
            <person name="Mullan P.B."/>
            <person name="Gautier A.V."/>
            <person name="Wood M.W."/>
            <person name="Edwards M.H."/>
            <person name="Jones B.V."/>
            <person name="Galyov E.E."/>
        </authorList>
    </citation>
    <scope>NUCLEOTIDE SEQUENCE [GENOMIC DNA]</scope>
    <source>
        <strain>2229</strain>
    </source>
</reference>